<name>NACB_PHANO</name>
<gene>
    <name type="primary">EGD1</name>
    <name type="ORF">SNOG_07434</name>
</gene>
<dbReference type="EMBL" id="CH445335">
    <property type="protein sequence ID" value="EAT84900.2"/>
    <property type="status" value="ALT_SEQ"/>
    <property type="molecule type" value="Genomic_DNA"/>
</dbReference>
<dbReference type="RefSeq" id="XP_001797767.1">
    <property type="nucleotide sequence ID" value="XM_001797715.1"/>
</dbReference>
<dbReference type="SMR" id="Q0ULD0"/>
<dbReference type="FunCoup" id="Q0ULD0">
    <property type="interactions" value="1140"/>
</dbReference>
<dbReference type="STRING" id="321614.Q0ULD0"/>
<dbReference type="GeneID" id="5974660"/>
<dbReference type="KEGG" id="pno:SNOG_07434"/>
<dbReference type="VEuPathDB" id="FungiDB:JI435_074340"/>
<dbReference type="eggNOG" id="KOG2240">
    <property type="taxonomic scope" value="Eukaryota"/>
</dbReference>
<dbReference type="InParanoid" id="Q0ULD0"/>
<dbReference type="OMA" id="RMQQSVR"/>
<dbReference type="Proteomes" id="UP000001055">
    <property type="component" value="Unassembled WGS sequence"/>
</dbReference>
<dbReference type="GO" id="GO:0005829">
    <property type="term" value="C:cytosol"/>
    <property type="evidence" value="ECO:0000318"/>
    <property type="project" value="GO_Central"/>
</dbReference>
<dbReference type="GO" id="GO:0005854">
    <property type="term" value="C:nascent polypeptide-associated complex"/>
    <property type="evidence" value="ECO:0000318"/>
    <property type="project" value="GO_Central"/>
</dbReference>
<dbReference type="GO" id="GO:0005634">
    <property type="term" value="C:nucleus"/>
    <property type="evidence" value="ECO:0007669"/>
    <property type="project" value="UniProtKB-SubCell"/>
</dbReference>
<dbReference type="GO" id="GO:0015031">
    <property type="term" value="P:protein transport"/>
    <property type="evidence" value="ECO:0007669"/>
    <property type="project" value="UniProtKB-KW"/>
</dbReference>
<dbReference type="CDD" id="cd22055">
    <property type="entry name" value="NAC_BTF3"/>
    <property type="match status" value="1"/>
</dbReference>
<dbReference type="FunFam" id="2.20.70.30:FF:000003">
    <property type="entry name" value="Nascent polypeptide-associated complex subunit beta"/>
    <property type="match status" value="1"/>
</dbReference>
<dbReference type="Gene3D" id="2.20.70.30">
    <property type="entry name" value="Nascent polypeptide-associated complex domain"/>
    <property type="match status" value="1"/>
</dbReference>
<dbReference type="InterPro" id="IPR039370">
    <property type="entry name" value="BTF3"/>
</dbReference>
<dbReference type="InterPro" id="IPR038187">
    <property type="entry name" value="NAC_A/B_dom_sf"/>
</dbReference>
<dbReference type="InterPro" id="IPR002715">
    <property type="entry name" value="Nas_poly-pep-assoc_cplx_dom"/>
</dbReference>
<dbReference type="PANTHER" id="PTHR10351">
    <property type="entry name" value="TRANSCRIPTION FACTOR BTF3 FAMILY MEMBER"/>
    <property type="match status" value="1"/>
</dbReference>
<dbReference type="Pfam" id="PF01849">
    <property type="entry name" value="NAC"/>
    <property type="match status" value="1"/>
</dbReference>
<dbReference type="SMART" id="SM01407">
    <property type="entry name" value="NAC"/>
    <property type="match status" value="1"/>
</dbReference>
<dbReference type="PROSITE" id="PS51151">
    <property type="entry name" value="NAC_AB"/>
    <property type="match status" value="1"/>
</dbReference>
<keyword id="KW-0963">Cytoplasm</keyword>
<keyword id="KW-0539">Nucleus</keyword>
<keyword id="KW-0653">Protein transport</keyword>
<keyword id="KW-0678">Repressor</keyword>
<keyword id="KW-0804">Transcription</keyword>
<keyword id="KW-0805">Transcription regulation</keyword>
<keyword id="KW-0813">Transport</keyword>
<comment type="function">
    <text evidence="1">Component of the nascent polypeptide-associated complex (NAC), a dynamic component of the ribosomal exit tunnel, protecting the emerging polypeptides from interaction with other cytoplasmic proteins to ensure appropriate nascent protein targeting. The NAC complex also promotes mitochondrial protein import by enhancing productive ribosome interactions with the outer mitochondrial membrane and blocks the inappropriate interaction of ribosomes translating non-secretory nascent polypeptides with translocation sites in the membrane of the endoplasmic reticulum. EGD1 may act as a transcription factor that exert a negative effect on the expression of several genes that are transcribed by RNA polymerase II.</text>
</comment>
<comment type="subunit">
    <text evidence="1">Part of the nascent polypeptide-associated complex (NAC), consisting of EGD2 and EGD1. NAC associates with ribosomes via EGD1 (By similarity).</text>
</comment>
<comment type="subcellular location">
    <subcellularLocation>
        <location evidence="1">Cytoplasm</location>
    </subcellularLocation>
    <subcellularLocation>
        <location evidence="1">Nucleus</location>
    </subcellularLocation>
    <text evidence="1">Predominantly cytoplasmic, may also transiently localize to the nucleus.</text>
</comment>
<comment type="similarity">
    <text evidence="4">Belongs to the NAC-beta family.</text>
</comment>
<comment type="sequence caution" evidence="4">
    <conflict type="erroneous gene model prediction">
        <sequence resource="EMBL-CDS" id="EAT84900"/>
    </conflict>
</comment>
<accession>Q0ULD0</accession>
<protein>
    <recommendedName>
        <fullName>Nascent polypeptide-associated complex subunit beta</fullName>
        <shortName>NAC-beta</shortName>
    </recommendedName>
    <alternativeName>
        <fullName>Beta-NAC</fullName>
    </alternativeName>
</protein>
<feature type="chain" id="PRO_0000273514" description="Nascent polypeptide-associated complex subunit beta">
    <location>
        <begin position="1"/>
        <end position="160"/>
    </location>
</feature>
<feature type="domain" description="NAC-A/B" evidence="2">
    <location>
        <begin position="33"/>
        <end position="98"/>
    </location>
</feature>
<feature type="region of interest" description="Disordered" evidence="3">
    <location>
        <begin position="16"/>
        <end position="36"/>
    </location>
</feature>
<feature type="region of interest" description="Disordered" evidence="3">
    <location>
        <begin position="118"/>
        <end position="160"/>
    </location>
</feature>
<feature type="compositionally biased region" description="Basic residues" evidence="3">
    <location>
        <begin position="20"/>
        <end position="30"/>
    </location>
</feature>
<feature type="compositionally biased region" description="Basic and acidic residues" evidence="3">
    <location>
        <begin position="124"/>
        <end position="134"/>
    </location>
</feature>
<feature type="compositionally biased region" description="Acidic residues" evidence="3">
    <location>
        <begin position="135"/>
        <end position="145"/>
    </location>
</feature>
<evidence type="ECO:0000250" key="1"/>
<evidence type="ECO:0000255" key="2">
    <source>
        <dbReference type="PROSITE-ProRule" id="PRU00507"/>
    </source>
</evidence>
<evidence type="ECO:0000256" key="3">
    <source>
        <dbReference type="SAM" id="MobiDB-lite"/>
    </source>
</evidence>
<evidence type="ECO:0000305" key="4"/>
<proteinExistence type="inferred from homology"/>
<reference key="1">
    <citation type="journal article" date="2007" name="Plant Cell">
        <title>Dothideomycete-plant interactions illuminated by genome sequencing and EST analysis of the wheat pathogen Stagonospora nodorum.</title>
        <authorList>
            <person name="Hane J.K."/>
            <person name="Lowe R.G.T."/>
            <person name="Solomon P.S."/>
            <person name="Tan K.-C."/>
            <person name="Schoch C.L."/>
            <person name="Spatafora J.W."/>
            <person name="Crous P.W."/>
            <person name="Kodira C.D."/>
            <person name="Birren B.W."/>
            <person name="Galagan J.E."/>
            <person name="Torriani S.F.F."/>
            <person name="McDonald B.A."/>
            <person name="Oliver R.P."/>
        </authorList>
    </citation>
    <scope>NUCLEOTIDE SEQUENCE [LARGE SCALE GENOMIC DNA]</scope>
    <source>
        <strain>SN15 / ATCC MYA-4574 / FGSC 10173</strain>
    </source>
</reference>
<sequence>MDQAKLARMQASVRIGGKGTPRRKVKKVHKSSGTDDKKLQTALKKLNVQPIQAIEEVNMFKSDGNVIHFSAPKVHASVPSNTFAIYGNGEDKELTELVPGILNQLGPDSLASLRKLAESYQSMQKEKGEDGDKKDDDDEDDDDIPELVAGDNFESKTEVE</sequence>
<organism>
    <name type="scientific">Phaeosphaeria nodorum (strain SN15 / ATCC MYA-4574 / FGSC 10173)</name>
    <name type="common">Glume blotch fungus</name>
    <name type="synonym">Parastagonospora nodorum</name>
    <dbReference type="NCBI Taxonomy" id="321614"/>
    <lineage>
        <taxon>Eukaryota</taxon>
        <taxon>Fungi</taxon>
        <taxon>Dikarya</taxon>
        <taxon>Ascomycota</taxon>
        <taxon>Pezizomycotina</taxon>
        <taxon>Dothideomycetes</taxon>
        <taxon>Pleosporomycetidae</taxon>
        <taxon>Pleosporales</taxon>
        <taxon>Pleosporineae</taxon>
        <taxon>Phaeosphaeriaceae</taxon>
        <taxon>Parastagonospora</taxon>
    </lineage>
</organism>